<protein>
    <recommendedName>
        <fullName>Tryptophan biosynthesis protein TrpCF</fullName>
    </recommendedName>
    <domain>
        <recommendedName>
            <fullName>Indole-3-glycerol phosphate synthase</fullName>
            <shortName>IGPS</shortName>
            <ecNumber>4.1.1.48</ecNumber>
        </recommendedName>
    </domain>
    <domain>
        <recommendedName>
            <fullName>N-(5'-phospho-ribosyl)anthranilate isomerase</fullName>
            <shortName>PRAI</shortName>
            <ecNumber>5.3.1.24</ecNumber>
        </recommendedName>
    </domain>
</protein>
<comment type="function">
    <text evidence="1">Bifunctional enzyme that catalyzes two sequential steps of tryptophan biosynthetic pathway. The first reaction is catalyzed by the isomerase, coded by the TrpF domain; the second reaction is catalyzed by the synthase, coded by the TrpC domain (By similarity).</text>
</comment>
<comment type="catalytic activity">
    <reaction>
        <text>N-(5-phospho-beta-D-ribosyl)anthranilate = 1-(2-carboxyphenylamino)-1-deoxy-D-ribulose 5-phosphate</text>
        <dbReference type="Rhea" id="RHEA:21540"/>
        <dbReference type="ChEBI" id="CHEBI:18277"/>
        <dbReference type="ChEBI" id="CHEBI:58613"/>
        <dbReference type="EC" id="5.3.1.24"/>
    </reaction>
</comment>
<comment type="catalytic activity">
    <reaction>
        <text>1-(2-carboxyphenylamino)-1-deoxy-D-ribulose 5-phosphate + H(+) = (1S,2R)-1-C-(indol-3-yl)glycerol 3-phosphate + CO2 + H2O</text>
        <dbReference type="Rhea" id="RHEA:23476"/>
        <dbReference type="ChEBI" id="CHEBI:15377"/>
        <dbReference type="ChEBI" id="CHEBI:15378"/>
        <dbReference type="ChEBI" id="CHEBI:16526"/>
        <dbReference type="ChEBI" id="CHEBI:58613"/>
        <dbReference type="ChEBI" id="CHEBI:58866"/>
        <dbReference type="EC" id="4.1.1.48"/>
    </reaction>
</comment>
<comment type="pathway">
    <text>Amino-acid biosynthesis; L-tryptophan biosynthesis; L-tryptophan from chorismate: step 3/5.</text>
</comment>
<comment type="pathway">
    <text>Amino-acid biosynthesis; L-tryptophan biosynthesis; L-tryptophan from chorismate: step 4/5.</text>
</comment>
<comment type="subunit">
    <text>Monomer.</text>
</comment>
<comment type="similarity">
    <text evidence="2">In the N-terminal section; belongs to the TrpC family.</text>
</comment>
<comment type="similarity">
    <text evidence="2">In the C-terminal section; belongs to the TrpF family.</text>
</comment>
<name>TRPC_VIBCH</name>
<accession>Q9KST5</accession>
<organism>
    <name type="scientific">Vibrio cholerae serotype O1 (strain ATCC 39315 / El Tor Inaba N16961)</name>
    <dbReference type="NCBI Taxonomy" id="243277"/>
    <lineage>
        <taxon>Bacteria</taxon>
        <taxon>Pseudomonadati</taxon>
        <taxon>Pseudomonadota</taxon>
        <taxon>Gammaproteobacteria</taxon>
        <taxon>Vibrionales</taxon>
        <taxon>Vibrionaceae</taxon>
        <taxon>Vibrio</taxon>
    </lineage>
</organism>
<reference key="1">
    <citation type="journal article" date="2000" name="Nature">
        <title>DNA sequence of both chromosomes of the cholera pathogen Vibrio cholerae.</title>
        <authorList>
            <person name="Heidelberg J.F."/>
            <person name="Eisen J.A."/>
            <person name="Nelson W.C."/>
            <person name="Clayton R.A."/>
            <person name="Gwinn M.L."/>
            <person name="Dodson R.J."/>
            <person name="Haft D.H."/>
            <person name="Hickey E.K."/>
            <person name="Peterson J.D."/>
            <person name="Umayam L.A."/>
            <person name="Gill S.R."/>
            <person name="Nelson K.E."/>
            <person name="Read T.D."/>
            <person name="Tettelin H."/>
            <person name="Richardson D.L."/>
            <person name="Ermolaeva M.D."/>
            <person name="Vamathevan J.J."/>
            <person name="Bass S."/>
            <person name="Qin H."/>
            <person name="Dragoi I."/>
            <person name="Sellers P."/>
            <person name="McDonald L.A."/>
            <person name="Utterback T.R."/>
            <person name="Fleischmann R.D."/>
            <person name="Nierman W.C."/>
            <person name="White O."/>
            <person name="Salzberg S.L."/>
            <person name="Smith H.O."/>
            <person name="Colwell R.R."/>
            <person name="Mekalanos J.J."/>
            <person name="Venter J.C."/>
            <person name="Fraser C.M."/>
        </authorList>
    </citation>
    <scope>NUCLEOTIDE SEQUENCE [LARGE SCALE GENOMIC DNA]</scope>
    <source>
        <strain>ATCC 39315 / El Tor Inaba N16961</strain>
    </source>
</reference>
<keyword id="KW-0028">Amino-acid biosynthesis</keyword>
<keyword id="KW-0057">Aromatic amino acid biosynthesis</keyword>
<keyword id="KW-0210">Decarboxylase</keyword>
<keyword id="KW-0413">Isomerase</keyword>
<keyword id="KW-0456">Lyase</keyword>
<keyword id="KW-0511">Multifunctional enzyme</keyword>
<keyword id="KW-1185">Reference proteome</keyword>
<keyword id="KW-0822">Tryptophan biosynthesis</keyword>
<sequence>MSEQLSEHISVQTAQMAQVLVKIVNDKYQWIEERKAKQPLASFHPLLTRSERDFYQALSGDNTVFILECKKASPSKGLIREEFDLDYIASVYGEYASAISVLTDEKYFQGRFEFLPQVRAQVAQPVLCKDFMVDPYQVYLARHYQADAILLMLSVLNDDQYRELAAVAHDLGMGVLTEVSNEQELKRAVDLQAKVIGINNRNLRDLTTDLNRTKQLAPLIPQGTIIISESGIYTHQQVRDLAEFANGFLIGSSLMAQSNLELAVRKIVLGEHKVCGLTHPDDAVKAYQAGSVFGGLIFVEKSKRFVDVEQARLTMSGAPLQYVGVFQNHPAAQVADIATKLGLFAVQLHGEEDSAYVSELRASLPESIEIWKAYGVSDALPELLPEHIDRHLLDAKVGEQSGGTGRSFDWRLLPKHSDLMLAGGLSAENVAQAAQLGCRGLDFNSGVESAPGKKDANQLQQVFQQLRNY</sequence>
<gene>
    <name type="primary">trpCF</name>
    <name type="ordered locus">VC_1171</name>
</gene>
<proteinExistence type="inferred from homology"/>
<feature type="chain" id="PRO_0000154285" description="Tryptophan biosynthesis protein TrpCF">
    <location>
        <begin position="1"/>
        <end position="469"/>
    </location>
</feature>
<feature type="region of interest" description="Indole-3-glycerol phosphate synthase">
    <location>
        <begin position="1"/>
        <end position="271"/>
    </location>
</feature>
<feature type="region of interest" description="N-(5'-phosphoribosyl)anthranilate isomerase">
    <location>
        <begin position="272"/>
        <end position="469"/>
    </location>
</feature>
<dbReference type="EC" id="4.1.1.48"/>
<dbReference type="EC" id="5.3.1.24"/>
<dbReference type="EMBL" id="AE003852">
    <property type="protein sequence ID" value="AAF94330.1"/>
    <property type="molecule type" value="Genomic_DNA"/>
</dbReference>
<dbReference type="PIR" id="F82232">
    <property type="entry name" value="F82232"/>
</dbReference>
<dbReference type="RefSeq" id="NP_230816.1">
    <property type="nucleotide sequence ID" value="NC_002505.1"/>
</dbReference>
<dbReference type="RefSeq" id="WP_000003291.1">
    <property type="nucleotide sequence ID" value="NZ_LT906614.1"/>
</dbReference>
<dbReference type="SMR" id="Q9KST5"/>
<dbReference type="STRING" id="243277.VC_1171"/>
<dbReference type="DNASU" id="2614604"/>
<dbReference type="EnsemblBacteria" id="AAF94330">
    <property type="protein sequence ID" value="AAF94330"/>
    <property type="gene ID" value="VC_1171"/>
</dbReference>
<dbReference type="KEGG" id="vch:VC_1171"/>
<dbReference type="PATRIC" id="fig|243277.26.peg.1120"/>
<dbReference type="eggNOG" id="COG0134">
    <property type="taxonomic scope" value="Bacteria"/>
</dbReference>
<dbReference type="eggNOG" id="COG0135">
    <property type="taxonomic scope" value="Bacteria"/>
</dbReference>
<dbReference type="HOGENOM" id="CLU_007713_1_1_6"/>
<dbReference type="UniPathway" id="UPA00035">
    <property type="reaction ID" value="UER00042"/>
</dbReference>
<dbReference type="UniPathway" id="UPA00035">
    <property type="reaction ID" value="UER00043"/>
</dbReference>
<dbReference type="Proteomes" id="UP000000584">
    <property type="component" value="Chromosome 1"/>
</dbReference>
<dbReference type="GO" id="GO:0004425">
    <property type="term" value="F:indole-3-glycerol-phosphate synthase activity"/>
    <property type="evidence" value="ECO:0000318"/>
    <property type="project" value="GO_Central"/>
</dbReference>
<dbReference type="GO" id="GO:0004640">
    <property type="term" value="F:phosphoribosylanthranilate isomerase activity"/>
    <property type="evidence" value="ECO:0000318"/>
    <property type="project" value="GO_Central"/>
</dbReference>
<dbReference type="GO" id="GO:0000162">
    <property type="term" value="P:L-tryptophan biosynthetic process"/>
    <property type="evidence" value="ECO:0000318"/>
    <property type="project" value="GO_Central"/>
</dbReference>
<dbReference type="CDD" id="cd00331">
    <property type="entry name" value="IGPS"/>
    <property type="match status" value="1"/>
</dbReference>
<dbReference type="CDD" id="cd00405">
    <property type="entry name" value="PRAI"/>
    <property type="match status" value="1"/>
</dbReference>
<dbReference type="FunFam" id="3.20.20.70:FF:000024">
    <property type="entry name" value="Indole-3-glycerol phosphate synthase"/>
    <property type="match status" value="1"/>
</dbReference>
<dbReference type="FunFam" id="3.20.20.70:FF:000165">
    <property type="entry name" value="Multifunctional fusion protein"/>
    <property type="match status" value="1"/>
</dbReference>
<dbReference type="Gene3D" id="3.20.20.70">
    <property type="entry name" value="Aldolase class I"/>
    <property type="match status" value="2"/>
</dbReference>
<dbReference type="HAMAP" id="MF_00134_B">
    <property type="entry name" value="IGPS_B"/>
    <property type="match status" value="1"/>
</dbReference>
<dbReference type="HAMAP" id="MF_00135">
    <property type="entry name" value="PRAI"/>
    <property type="match status" value="1"/>
</dbReference>
<dbReference type="InterPro" id="IPR013785">
    <property type="entry name" value="Aldolase_TIM"/>
</dbReference>
<dbReference type="InterPro" id="IPR045186">
    <property type="entry name" value="Indole-3-glycerol_P_synth"/>
</dbReference>
<dbReference type="InterPro" id="IPR013798">
    <property type="entry name" value="Indole-3-glycerol_P_synth_dom"/>
</dbReference>
<dbReference type="InterPro" id="IPR001468">
    <property type="entry name" value="Indole-3-GlycerolPSynthase_CS"/>
</dbReference>
<dbReference type="InterPro" id="IPR001240">
    <property type="entry name" value="PRAI_dom"/>
</dbReference>
<dbReference type="InterPro" id="IPR011060">
    <property type="entry name" value="RibuloseP-bd_barrel"/>
</dbReference>
<dbReference type="NCBIfam" id="NF001377">
    <property type="entry name" value="PRK00278.2-4"/>
    <property type="match status" value="1"/>
</dbReference>
<dbReference type="NCBIfam" id="NF006945">
    <property type="entry name" value="PRK09427.1"/>
    <property type="match status" value="1"/>
</dbReference>
<dbReference type="PANTHER" id="PTHR22854:SF2">
    <property type="entry name" value="INDOLE-3-GLYCEROL-PHOSPHATE SYNTHASE"/>
    <property type="match status" value="1"/>
</dbReference>
<dbReference type="PANTHER" id="PTHR22854">
    <property type="entry name" value="TRYPTOPHAN BIOSYNTHESIS PROTEIN"/>
    <property type="match status" value="1"/>
</dbReference>
<dbReference type="Pfam" id="PF00218">
    <property type="entry name" value="IGPS"/>
    <property type="match status" value="1"/>
</dbReference>
<dbReference type="Pfam" id="PF00697">
    <property type="entry name" value="PRAI"/>
    <property type="match status" value="1"/>
</dbReference>
<dbReference type="SUPFAM" id="SSF51366">
    <property type="entry name" value="Ribulose-phoshate binding barrel"/>
    <property type="match status" value="2"/>
</dbReference>
<dbReference type="PROSITE" id="PS00614">
    <property type="entry name" value="IGPS"/>
    <property type="match status" value="1"/>
</dbReference>
<evidence type="ECO:0000250" key="1"/>
<evidence type="ECO:0000305" key="2"/>